<dbReference type="EC" id="4.1.1.126" evidence="2"/>
<dbReference type="EMBL" id="BA000002">
    <property type="protein sequence ID" value="BAA81089.1"/>
    <property type="molecule type" value="Genomic_DNA"/>
</dbReference>
<dbReference type="PIR" id="A72513">
    <property type="entry name" value="A72513"/>
</dbReference>
<dbReference type="RefSeq" id="WP_010866780.1">
    <property type="nucleotide sequence ID" value="NC_000854.2"/>
</dbReference>
<dbReference type="SMR" id="Q9YA60"/>
<dbReference type="STRING" id="272557.APE_2078"/>
<dbReference type="EnsemblBacteria" id="BAA81089">
    <property type="protein sequence ID" value="BAA81089"/>
    <property type="gene ID" value="APE_2078"/>
</dbReference>
<dbReference type="GeneID" id="1445177"/>
<dbReference type="KEGG" id="ape:APE_2078"/>
<dbReference type="PATRIC" id="fig|272557.25.peg.1385"/>
<dbReference type="eggNOG" id="arCOG01671">
    <property type="taxonomic scope" value="Archaea"/>
</dbReference>
<dbReference type="BioCyc" id="MetaCyc:MONOMER-21121"/>
<dbReference type="UniPathway" id="UPA00057"/>
<dbReference type="Proteomes" id="UP000002518">
    <property type="component" value="Chromosome"/>
</dbReference>
<dbReference type="GO" id="GO:0005737">
    <property type="term" value="C:cytoplasm"/>
    <property type="evidence" value="ECO:0007669"/>
    <property type="project" value="TreeGrafter"/>
</dbReference>
<dbReference type="GO" id="GO:0016831">
    <property type="term" value="F:carboxy-lyase activity"/>
    <property type="evidence" value="ECO:0007669"/>
    <property type="project" value="UniProtKB-KW"/>
</dbReference>
<dbReference type="GO" id="GO:0046872">
    <property type="term" value="F:metal ion binding"/>
    <property type="evidence" value="ECO:0007669"/>
    <property type="project" value="UniProtKB-KW"/>
</dbReference>
<dbReference type="GO" id="GO:0008299">
    <property type="term" value="P:isoprenoid biosynthetic process"/>
    <property type="evidence" value="ECO:0007669"/>
    <property type="project" value="UniProtKB-KW"/>
</dbReference>
<dbReference type="FunFam" id="3.40.1670.10:FF:000003">
    <property type="entry name" value="Phenolic acid decarboxylase"/>
    <property type="match status" value="1"/>
</dbReference>
<dbReference type="Gene3D" id="3.40.1670.10">
    <property type="entry name" value="UbiD C-terminal domain-like"/>
    <property type="match status" value="1"/>
</dbReference>
<dbReference type="InterPro" id="IPR002830">
    <property type="entry name" value="UbiD"/>
</dbReference>
<dbReference type="InterPro" id="IPR049381">
    <property type="entry name" value="UbiD-like_C"/>
</dbReference>
<dbReference type="InterPro" id="IPR049383">
    <property type="entry name" value="UbiD-like_N"/>
</dbReference>
<dbReference type="InterPro" id="IPR048304">
    <property type="entry name" value="UbiD_Rift_dom"/>
</dbReference>
<dbReference type="NCBIfam" id="TIGR00148">
    <property type="entry name" value="UbiD family decarboxylase"/>
    <property type="match status" value="1"/>
</dbReference>
<dbReference type="PANTHER" id="PTHR30108">
    <property type="entry name" value="3-OCTAPRENYL-4-HYDROXYBENZOATE CARBOXY-LYASE-RELATED"/>
    <property type="match status" value="1"/>
</dbReference>
<dbReference type="PANTHER" id="PTHR30108:SF21">
    <property type="entry name" value="4-HYDROXYBENZOATE DECARBOXYLASE"/>
    <property type="match status" value="1"/>
</dbReference>
<dbReference type="Pfam" id="PF01977">
    <property type="entry name" value="UbiD"/>
    <property type="match status" value="1"/>
</dbReference>
<dbReference type="Pfam" id="PF20696">
    <property type="entry name" value="UbiD_C"/>
    <property type="match status" value="1"/>
</dbReference>
<dbReference type="Pfam" id="PF20695">
    <property type="entry name" value="UbiD_N"/>
    <property type="match status" value="1"/>
</dbReference>
<dbReference type="SUPFAM" id="SSF50475">
    <property type="entry name" value="FMN-binding split barrel"/>
    <property type="match status" value="1"/>
</dbReference>
<dbReference type="SUPFAM" id="SSF143968">
    <property type="entry name" value="UbiD C-terminal domain-like"/>
    <property type="match status" value="1"/>
</dbReference>
<evidence type="ECO:0000250" key="1">
    <source>
        <dbReference type="UniProtKB" id="P0AAB4"/>
    </source>
</evidence>
<evidence type="ECO:0000269" key="2">
    <source>
    </source>
</evidence>
<evidence type="ECO:0000269" key="3">
    <source>
    </source>
</evidence>
<evidence type="ECO:0000303" key="4">
    <source>
    </source>
</evidence>
<evidence type="ECO:0000303" key="5">
    <source>
    </source>
</evidence>
<evidence type="ECO:0000305" key="6"/>
<evidence type="ECO:0000305" key="7">
    <source>
    </source>
</evidence>
<evidence type="ECO:0000312" key="8">
    <source>
        <dbReference type="EMBL" id="BAA81089.1"/>
    </source>
</evidence>
<name>AMPD_AERPE</name>
<keyword id="KW-0210">Decarboxylase</keyword>
<keyword id="KW-0285">Flavoprotein</keyword>
<keyword id="KW-0288">FMN</keyword>
<keyword id="KW-0414">Isoprene biosynthesis</keyword>
<keyword id="KW-0456">Lyase</keyword>
<keyword id="KW-0464">Manganese</keyword>
<keyword id="KW-0479">Metal-binding</keyword>
<keyword id="KW-1185">Reference proteome</keyword>
<sequence length="437" mass="47636">MEDASLKSFLEKVGYRVVDRTLSREYEVARLIAETQGCGPPLLARIEGVRQPVAVNVVDTREKLYKALGVTGDSEAYAKIVDSTMRPGRLEYVDKPPLDEMPEGFEGLPAARFYEGEAGLYLSSGIVIACYEGVCNASIHRLLILGRERAAIRIVPRHLWHLYRKARERGEDLPATVVVGLHPAVLLAAATSPPLGVFELGLAAGMLGGSMKVYRSPVHGNPVPLGAAMVADVWITGEQVEEGPYVDALLTYDRVRRQPVVRLEAAYIKEGEYTHTIMGGSLEHVNLMGFPREASIWEAVRRALPRVRAVRLTPASGGWLHAVIAVEKQHEGDGKTAIMAAFAAHPSLKHVVVVDSDVDVDDPMQVEWAIATRFQADKDLVIIPRARGSTLDPSAADGLTAKMGLDATKPLDAGMGYERGRIPGFKWGSRRCHQPGD</sequence>
<organism>
    <name type="scientific">Aeropyrum pernix (strain ATCC 700893 / DSM 11879 / JCM 9820 / NBRC 100138 / K1)</name>
    <dbReference type="NCBI Taxonomy" id="272557"/>
    <lineage>
        <taxon>Archaea</taxon>
        <taxon>Thermoproteota</taxon>
        <taxon>Thermoprotei</taxon>
        <taxon>Desulfurococcales</taxon>
        <taxon>Desulfurococcaceae</taxon>
        <taxon>Aeropyrum</taxon>
    </lineage>
</organism>
<proteinExistence type="evidence at protein level"/>
<feature type="chain" id="PRO_0000157380" description="Anhydromevalonate phosphate decarboxylase">
    <location>
        <begin position="1"/>
        <end position="437"/>
    </location>
</feature>
<feature type="active site" description="Proton acceptor" evidence="1">
    <location>
        <position position="247"/>
    </location>
</feature>
<feature type="binding site" evidence="1">
    <location>
        <position position="136"/>
    </location>
    <ligand>
        <name>Mn(2+)</name>
        <dbReference type="ChEBI" id="CHEBI:29035"/>
    </ligand>
</feature>
<feature type="binding site" evidence="1">
    <location>
        <position position="199"/>
    </location>
    <ligand>
        <name>Mn(2+)</name>
        <dbReference type="ChEBI" id="CHEBI:29035"/>
    </ligand>
</feature>
<protein>
    <recommendedName>
        <fullName evidence="5">Anhydromevalonate phosphate decarboxylase</fullName>
        <shortName evidence="5">AMPD</shortName>
        <ecNumber evidence="2">4.1.1.126</ecNumber>
    </recommendedName>
    <alternativeName>
        <fullName evidence="4">Trans-anhydromevalonate 5-phosphate decarboxylase</fullName>
        <shortName evidence="4">tAHMP decarboxylase</shortName>
    </alternativeName>
</protein>
<gene>
    <name evidence="8" type="ordered locus">APE_2078</name>
</gene>
<comment type="function">
    <text evidence="2 3">Catalyzes the conversion of trans-anhydromevalonate 5-phosphate (tAHMP) into isopentenyl phosphate (PubMed:30224495). Involved in the archaeal mevalonate (MVA) pathway, which provides fundamental precursors for isoprenoid biosynthesis, such as isopentenyl diphosphate (IPP) and dimethylallyl diphosphate (DMAPP) (PubMed:30224495, PubMed:31924615).</text>
</comment>
<comment type="catalytic activity">
    <reaction evidence="2">
        <text>(2E)-3-methyl-5-phosphooxypent-2-enoate + H(+) = isopentenyl phosphate + CO2</text>
        <dbReference type="Rhea" id="RHEA:78971"/>
        <dbReference type="ChEBI" id="CHEBI:15378"/>
        <dbReference type="ChEBI" id="CHEBI:16526"/>
        <dbReference type="ChEBI" id="CHEBI:65078"/>
        <dbReference type="ChEBI" id="CHEBI:229665"/>
        <dbReference type="EC" id="4.1.1.126"/>
    </reaction>
    <physiologicalReaction direction="left-to-right" evidence="2">
        <dbReference type="Rhea" id="RHEA:78972"/>
    </physiologicalReaction>
</comment>
<comment type="cofactor">
    <cofactor evidence="1">
        <name>prenylated FMN</name>
        <dbReference type="ChEBI" id="CHEBI:87746"/>
    </cofactor>
</comment>
<comment type="cofactor">
    <cofactor evidence="1">
        <name>Mn(2+)</name>
        <dbReference type="ChEBI" id="CHEBI:29035"/>
    </cofactor>
</comment>
<comment type="pathway">
    <text evidence="3 7">Isoprenoid biosynthesis; isopentenyl diphosphate biosynthesis via mevalonate pathway.</text>
</comment>
<comment type="similarity">
    <text evidence="6">Belongs to the UbiD family.</text>
</comment>
<reference key="1">
    <citation type="journal article" date="1999" name="DNA Res.">
        <title>Complete genome sequence of an aerobic hyper-thermophilic crenarchaeon, Aeropyrum pernix K1.</title>
        <authorList>
            <person name="Kawarabayasi Y."/>
            <person name="Hino Y."/>
            <person name="Horikawa H."/>
            <person name="Yamazaki S."/>
            <person name="Haikawa Y."/>
            <person name="Jin-no K."/>
            <person name="Takahashi M."/>
            <person name="Sekine M."/>
            <person name="Baba S."/>
            <person name="Ankai A."/>
            <person name="Kosugi H."/>
            <person name="Hosoyama A."/>
            <person name="Fukui S."/>
            <person name="Nagai Y."/>
            <person name="Nishijima K."/>
            <person name="Nakazawa H."/>
            <person name="Takamiya M."/>
            <person name="Masuda S."/>
            <person name="Funahashi T."/>
            <person name="Tanaka T."/>
            <person name="Kudoh Y."/>
            <person name="Yamazaki J."/>
            <person name="Kushida N."/>
            <person name="Oguchi A."/>
            <person name="Aoki K."/>
            <person name="Kubota K."/>
            <person name="Nakamura Y."/>
            <person name="Nomura N."/>
            <person name="Sako Y."/>
            <person name="Kikuchi H."/>
        </authorList>
    </citation>
    <scope>NUCLEOTIDE SEQUENCE [LARGE SCALE GENOMIC DNA]</scope>
    <source>
        <strain>ATCC 700893 / DSM 11879 / JCM 9820 / NBRC 100138 / K1</strain>
    </source>
</reference>
<reference key="2">
    <citation type="journal article" date="2018" name="Proc. Natl. Acad. Sci. U.S.A.">
        <title>Modified mevalonate pathway of the archaeon Aeropyrum pernix proceeds via trans-anhydromevalonate 5-phosphate.</title>
        <authorList>
            <person name="Hayakawa H."/>
            <person name="Motoyama K."/>
            <person name="Sobue F."/>
            <person name="Ito T."/>
            <person name="Kawaide H."/>
            <person name="Yoshimura T."/>
            <person name="Hemmi H."/>
        </authorList>
    </citation>
    <scope>FUNCTION</scope>
    <scope>CATALYTIC ACTIVITY</scope>
    <scope>PATHWAY</scope>
</reference>
<reference key="3">
    <citation type="journal article" date="2020" name="Appl. Environ. Microbiol.">
        <title>Reconstruction of the 'Archaeal' Mevalonate Pathway from the Methanogenic Archaeon Methanosarcina mazei in Escherichia coli Cells.</title>
        <authorList>
            <person name="Yoshida R."/>
            <person name="Yoshimura T."/>
            <person name="Hemmi H."/>
        </authorList>
    </citation>
    <scope>FUNCTION</scope>
    <scope>PATHWAY</scope>
</reference>
<accession>Q9YA60</accession>